<dbReference type="EMBL" id="CH477692">
    <property type="protein sequence ID" value="EAT37220.1"/>
    <property type="molecule type" value="Genomic_DNA"/>
</dbReference>
<dbReference type="SMR" id="Q16RY9"/>
<dbReference type="STRING" id="7159.Q16RY9"/>
<dbReference type="PaxDb" id="7159-AAEL010772-PA"/>
<dbReference type="EnsemblMetazoa" id="AAEL010772-RA">
    <property type="protein sequence ID" value="AAEL010772-PA"/>
    <property type="gene ID" value="AAEL010772"/>
</dbReference>
<dbReference type="GeneID" id="5573861"/>
<dbReference type="KEGG" id="aag:5573861"/>
<dbReference type="VEuPathDB" id="VectorBase:AAEL010772"/>
<dbReference type="eggNOG" id="ENOG502QQFE">
    <property type="taxonomic scope" value="Eukaryota"/>
</dbReference>
<dbReference type="HOGENOM" id="CLU_282320_0_0_1"/>
<dbReference type="InParanoid" id="Q16RY9"/>
<dbReference type="OMA" id="ENCGSDI"/>
<dbReference type="OrthoDB" id="1904536at2759"/>
<dbReference type="PhylomeDB" id="Q16RY9"/>
<dbReference type="Proteomes" id="UP000008820">
    <property type="component" value="Chromosome 2"/>
</dbReference>
<dbReference type="Proteomes" id="UP000682892">
    <property type="component" value="Chromosome 2"/>
</dbReference>
<dbReference type="GO" id="GO:0005930">
    <property type="term" value="C:axoneme"/>
    <property type="evidence" value="ECO:0000250"/>
    <property type="project" value="UniProtKB"/>
</dbReference>
<dbReference type="GO" id="GO:0070840">
    <property type="term" value="F:dynein complex binding"/>
    <property type="evidence" value="ECO:0000250"/>
    <property type="project" value="UniProtKB"/>
</dbReference>
<dbReference type="GO" id="GO:0035082">
    <property type="term" value="P:axoneme assembly"/>
    <property type="evidence" value="ECO:0007669"/>
    <property type="project" value="TreeGrafter"/>
</dbReference>
<dbReference type="GO" id="GO:0060271">
    <property type="term" value="P:cilium assembly"/>
    <property type="evidence" value="ECO:0000250"/>
    <property type="project" value="UniProtKB"/>
</dbReference>
<dbReference type="FunFam" id="3.80.10.10:FF:000166">
    <property type="entry name" value="Dynein assembly factor 1, axonemal"/>
    <property type="match status" value="1"/>
</dbReference>
<dbReference type="FunFam" id="3.80.10.10:FF:000331">
    <property type="entry name" value="Dynein assembly factor 1, axonemal homolog"/>
    <property type="match status" value="1"/>
</dbReference>
<dbReference type="Gene3D" id="3.80.10.10">
    <property type="entry name" value="Ribonuclease Inhibitor"/>
    <property type="match status" value="2"/>
</dbReference>
<dbReference type="InterPro" id="IPR050576">
    <property type="entry name" value="Cilia_flagella_integrity"/>
</dbReference>
<dbReference type="InterPro" id="IPR001611">
    <property type="entry name" value="Leu-rich_rpt"/>
</dbReference>
<dbReference type="InterPro" id="IPR032675">
    <property type="entry name" value="LRR_dom_sf"/>
</dbReference>
<dbReference type="PANTHER" id="PTHR45973:SF9">
    <property type="entry name" value="LEUCINE-RICH REPEAT-CONTAINING PROTEIN 46"/>
    <property type="match status" value="1"/>
</dbReference>
<dbReference type="PANTHER" id="PTHR45973">
    <property type="entry name" value="PROTEIN PHOSPHATASE 1 REGULATORY SUBUNIT SDS22-RELATED"/>
    <property type="match status" value="1"/>
</dbReference>
<dbReference type="Pfam" id="PF14580">
    <property type="entry name" value="LRR_9"/>
    <property type="match status" value="1"/>
</dbReference>
<dbReference type="SMART" id="SM00365">
    <property type="entry name" value="LRR_SD22"/>
    <property type="match status" value="4"/>
</dbReference>
<dbReference type="SUPFAM" id="SSF52075">
    <property type="entry name" value="Outer arm dynein light chain 1"/>
    <property type="match status" value="1"/>
</dbReference>
<dbReference type="PROSITE" id="PS51450">
    <property type="entry name" value="LRR"/>
    <property type="match status" value="5"/>
</dbReference>
<feature type="chain" id="PRO_0000363934" description="Dynein axonemal assembly factor 1 homolog">
    <location>
        <begin position="1"/>
        <end position="1107"/>
    </location>
</feature>
<feature type="repeat" description="LRR 1">
    <location>
        <begin position="34"/>
        <end position="56"/>
    </location>
</feature>
<feature type="repeat" description="LRR 2">
    <location>
        <begin position="57"/>
        <end position="78"/>
    </location>
</feature>
<feature type="repeat" description="LRR 3">
    <location>
        <begin position="79"/>
        <end position="100"/>
    </location>
</feature>
<feature type="repeat" description="LRR 4">
    <location>
        <begin position="101"/>
        <end position="122"/>
    </location>
</feature>
<feature type="repeat" description="LRR 5">
    <location>
        <begin position="125"/>
        <end position="146"/>
    </location>
</feature>
<feature type="repeat" description="LRR 6">
    <location>
        <begin position="150"/>
        <end position="171"/>
    </location>
</feature>
<feature type="domain" description="LRRCT">
    <location>
        <begin position="184"/>
        <end position="223"/>
    </location>
</feature>
<feature type="region of interest" description="Disordered" evidence="2">
    <location>
        <begin position="258"/>
        <end position="281"/>
    </location>
</feature>
<feature type="region of interest" description="Disordered" evidence="2">
    <location>
        <begin position="428"/>
        <end position="487"/>
    </location>
</feature>
<feature type="region of interest" description="Disordered" evidence="2">
    <location>
        <begin position="500"/>
        <end position="608"/>
    </location>
</feature>
<feature type="region of interest" description="Disordered" evidence="2">
    <location>
        <begin position="780"/>
        <end position="810"/>
    </location>
</feature>
<feature type="region of interest" description="Disordered" evidence="2">
    <location>
        <begin position="834"/>
        <end position="855"/>
    </location>
</feature>
<feature type="region of interest" description="Disordered" evidence="2">
    <location>
        <begin position="1070"/>
        <end position="1107"/>
    </location>
</feature>
<feature type="compositionally biased region" description="Polar residues" evidence="2">
    <location>
        <begin position="428"/>
        <end position="437"/>
    </location>
</feature>
<feature type="compositionally biased region" description="Acidic residues" evidence="2">
    <location>
        <begin position="446"/>
        <end position="459"/>
    </location>
</feature>
<feature type="compositionally biased region" description="Basic and acidic residues" evidence="2">
    <location>
        <begin position="500"/>
        <end position="512"/>
    </location>
</feature>
<feature type="compositionally biased region" description="Acidic residues" evidence="2">
    <location>
        <begin position="531"/>
        <end position="544"/>
    </location>
</feature>
<feature type="compositionally biased region" description="Low complexity" evidence="2">
    <location>
        <begin position="549"/>
        <end position="560"/>
    </location>
</feature>
<feature type="compositionally biased region" description="Polar residues" evidence="2">
    <location>
        <begin position="581"/>
        <end position="597"/>
    </location>
</feature>
<feature type="compositionally biased region" description="Basic and acidic residues" evidence="2">
    <location>
        <begin position="801"/>
        <end position="810"/>
    </location>
</feature>
<feature type="compositionally biased region" description="Acidic residues" evidence="2">
    <location>
        <begin position="844"/>
        <end position="855"/>
    </location>
</feature>
<feature type="compositionally biased region" description="Basic and acidic residues" evidence="2">
    <location>
        <begin position="1083"/>
        <end position="1097"/>
    </location>
</feature>
<feature type="compositionally biased region" description="Acidic residues" evidence="2">
    <location>
        <begin position="1098"/>
        <end position="1107"/>
    </location>
</feature>
<comment type="function">
    <text evidence="1">Cilium-specific protein required for cilia structures.</text>
</comment>
<comment type="subcellular location">
    <subcellularLocation>
        <location evidence="1">Cell projection</location>
        <location evidence="1">Cilium</location>
    </subcellularLocation>
</comment>
<comment type="similarity">
    <text evidence="3">Belongs to the DNAAF1 family.</text>
</comment>
<accession>Q16RY9</accession>
<reference key="1">
    <citation type="journal article" date="2007" name="Science">
        <title>Genome sequence of Aedes aegypti, a major arbovirus vector.</title>
        <authorList>
            <person name="Nene V."/>
            <person name="Wortman J.R."/>
            <person name="Lawson D."/>
            <person name="Haas B.J."/>
            <person name="Kodira C.D."/>
            <person name="Tu Z.J."/>
            <person name="Loftus B.J."/>
            <person name="Xi Z."/>
            <person name="Megy K."/>
            <person name="Grabherr M."/>
            <person name="Ren Q."/>
            <person name="Zdobnov E.M."/>
            <person name="Lobo N.F."/>
            <person name="Campbell K.S."/>
            <person name="Brown S.E."/>
            <person name="Bonaldo M.F."/>
            <person name="Zhu J."/>
            <person name="Sinkins S.P."/>
            <person name="Hogenkamp D.G."/>
            <person name="Amedeo P."/>
            <person name="Arensburger P."/>
            <person name="Atkinson P.W."/>
            <person name="Bidwell S.L."/>
            <person name="Biedler J."/>
            <person name="Birney E."/>
            <person name="Bruggner R.V."/>
            <person name="Costas J."/>
            <person name="Coy M.R."/>
            <person name="Crabtree J."/>
            <person name="Crawford M."/>
            <person name="DeBruyn B."/>
            <person name="DeCaprio D."/>
            <person name="Eiglmeier K."/>
            <person name="Eisenstadt E."/>
            <person name="El-Dorry H."/>
            <person name="Gelbart W.M."/>
            <person name="Gomes S.L."/>
            <person name="Hammond M."/>
            <person name="Hannick L.I."/>
            <person name="Hogan J.R."/>
            <person name="Holmes M.H."/>
            <person name="Jaffe D."/>
            <person name="Johnston S.J."/>
            <person name="Kennedy R.C."/>
            <person name="Koo H."/>
            <person name="Kravitz S."/>
            <person name="Kriventseva E.V."/>
            <person name="Kulp D."/>
            <person name="Labutti K."/>
            <person name="Lee E."/>
            <person name="Li S."/>
            <person name="Lovin D.D."/>
            <person name="Mao C."/>
            <person name="Mauceli E."/>
            <person name="Menck C.F."/>
            <person name="Miller J.R."/>
            <person name="Montgomery P."/>
            <person name="Mori A."/>
            <person name="Nascimento A.L."/>
            <person name="Naveira H.F."/>
            <person name="Nusbaum C."/>
            <person name="O'Leary S.B."/>
            <person name="Orvis J."/>
            <person name="Pertea M."/>
            <person name="Quesneville H."/>
            <person name="Reidenbach K.R."/>
            <person name="Rogers Y.-H.C."/>
            <person name="Roth C.W."/>
            <person name="Schneider J.R."/>
            <person name="Schatz M."/>
            <person name="Shumway M."/>
            <person name="Stanke M."/>
            <person name="Stinson E.O."/>
            <person name="Tubio J.M.C."/>
            <person name="Vanzee J.P."/>
            <person name="Verjovski-Almeida S."/>
            <person name="Werner D."/>
            <person name="White O.R."/>
            <person name="Wyder S."/>
            <person name="Zeng Q."/>
            <person name="Zhao Q."/>
            <person name="Zhao Y."/>
            <person name="Hill C.A."/>
            <person name="Raikhel A.S."/>
            <person name="Soares M.B."/>
            <person name="Knudson D.L."/>
            <person name="Lee N.H."/>
            <person name="Galagan J."/>
            <person name="Salzberg S.L."/>
            <person name="Paulsen I.T."/>
            <person name="Dimopoulos G."/>
            <person name="Collins F.H."/>
            <person name="Bruce B."/>
            <person name="Fraser-Liggett C.M."/>
            <person name="Severson D.W."/>
        </authorList>
    </citation>
    <scope>NUCLEOTIDE SEQUENCE [LARGE SCALE GENOMIC DNA]</scope>
    <source>
        <strain>LVPib12</strain>
    </source>
</reference>
<protein>
    <recommendedName>
        <fullName>Dynein axonemal assembly factor 1 homolog</fullName>
    </recommendedName>
    <alternativeName>
        <fullName>Leucine-rich repeat-containing protein 50</fullName>
    </alternativeName>
</protein>
<organism>
    <name type="scientific">Aedes aegypti</name>
    <name type="common">Yellowfever mosquito</name>
    <name type="synonym">Culex aegypti</name>
    <dbReference type="NCBI Taxonomy" id="7159"/>
    <lineage>
        <taxon>Eukaryota</taxon>
        <taxon>Metazoa</taxon>
        <taxon>Ecdysozoa</taxon>
        <taxon>Arthropoda</taxon>
        <taxon>Hexapoda</taxon>
        <taxon>Insecta</taxon>
        <taxon>Pterygota</taxon>
        <taxon>Neoptera</taxon>
        <taxon>Endopterygota</taxon>
        <taxon>Diptera</taxon>
        <taxon>Nematocera</taxon>
        <taxon>Culicoidea</taxon>
        <taxon>Culicidae</taxon>
        <taxon>Culicinae</taxon>
        <taxon>Aedini</taxon>
        <taxon>Aedes</taxon>
        <taxon>Stegomyia</taxon>
    </lineage>
</organism>
<evidence type="ECO:0000250" key="1"/>
<evidence type="ECO:0000256" key="2">
    <source>
        <dbReference type="SAM" id="MobiDB-lite"/>
    </source>
</evidence>
<evidence type="ECO:0000305" key="3"/>
<sequence>MVRECVEESFGPKKMTKKSIVDSCKKNKLYITPHLNDILYLNYSGYNAIESLEEYVGLKCLWLECNAISEIKGLEYQTELKCLYLQNNLITKIENLDSCKQLDTLNLSHNHITRIENCGHDILPVLNTLNLSHNYLKTADNLDHLRHCNFVSVLDLSHNRIEDIAIVKILGGMKELRVLTMTGNPVVNEIPSYRKTLILECKNLTYLDTRPVFDRDRACAEAWKRGGYEEERKELLRWKKEEQRKIRRSINATLRMRHRGDGEPELLKTSSDEEDEDKASKCGKDMSSMLEINQKTNEQAWAEVEKMFCTTPSATGSSGIFQRFATNRGGGADGDGEVIETSEEDIEATIEDIKAVSPKKLIEEISSDSDGAKENYDCKPDEVIAKPCSEKLIEEIVIETAECDSGPSSPEYHEALDKPIENIVNLTNESPLTSPSFDTEPRTLIEEIEPTDVEEEQQIEEQPAPKPLSKNMEKVMSTEKEDDTLNVLIENNEEISITMESKDGELISKVESRPPSTECKKYKIVSTNDVDNSESEPTDITNEDQEYRSSSVSVTSSTDSSDSEDLFDKIVPNKHPKLATNYRQDSTTSTDSENEVSPSKPPIKLEKEKSIAECIDEYKKFFKAAKILESDPEDESSTKMARPHTAKAKRTEPIIYEGVLRNMERNSNESKIAEARTEAKESKEKVIDRLIEQQNLVDMNLEEQNISIGGQEHDFNEYRLEAFRKDQEKLQCLIDRVTAQKDLYNAHIDQIHNQLANIMEDYDQIGLKLKKVDDFLENIKEEPKAPETPSIESEEEIPEELEVHSSEHEQEIVENDNLAQQIIEKIISQSVKTSSEDLKSNFDDSSESSDSAEEDFMDSIRPDHNLLEILTSPKPIPILDPELIPNVDNEFQRDPVYRKFIEIQEEIDKLTEDELYDIVTEATGEFSEEAHVEHCLNTQVDQYWKQYDDIEEFRKNINLDSHPIIQKFRQFIRCHCENKYPGEVDSTIDNLDKACRKLERRLSNQLFDEYLELSRKMSVATIGGESSANEIELIEVDEEENDVEDVVKKITAWVEEQVQNEIAELNEERAAHAGEVMQDTEDVESKPVEIDGTKEETVDSELADNCD</sequence>
<keyword id="KW-0966">Cell projection</keyword>
<keyword id="KW-0969">Cilium</keyword>
<keyword id="KW-0433">Leucine-rich repeat</keyword>
<keyword id="KW-1185">Reference proteome</keyword>
<keyword id="KW-0677">Repeat</keyword>
<proteinExistence type="inferred from homology"/>
<gene>
    <name type="ORF">AAEL010772</name>
</gene>
<name>DAAF1_AEDAE</name>